<accession>P18062</accession>
<evidence type="ECO:0000255" key="1">
    <source>
        <dbReference type="HAMAP-Rule" id="MF_00859"/>
    </source>
</evidence>
<feature type="chain" id="PRO_0000198594" description="Ribulose bisphosphate carboxylase small subunit">
    <location>
        <begin position="1"/>
        <end position="106"/>
    </location>
</feature>
<reference key="1">
    <citation type="journal article" date="1985" name="FEMS Microbiol. Lett.">
        <title>Cotranscription of the large and small subunit genes of ribulose-1,5-bisphosphate carboxylase/oxygenase in Cyanophora paradoxa.</title>
        <authorList>
            <person name="Starnes S.M."/>
            <person name="Lambert D.H."/>
            <person name="Maxwell E.S."/>
            <person name="Stevens S.E. Jr."/>
            <person name="Porter R.D."/>
            <person name="Shively J.M."/>
        </authorList>
    </citation>
    <scope>NUCLEOTIDE SEQUENCE [GENOMIC DNA]</scope>
</reference>
<reference key="2">
    <citation type="journal article" date="1995" name="Plant Mol. Biol. Rep.">
        <title>Nucleotide sequence of the cyanelle DNA from Cyanophora paradoxa.</title>
        <authorList>
            <person name="Stirewalt V.L."/>
            <person name="Michalowski C.B."/>
            <person name="Loeffelhardt W."/>
            <person name="Bohnert H.J."/>
            <person name="Bryant D.A."/>
        </authorList>
    </citation>
    <scope>NUCLEOTIDE SEQUENCE [LARGE SCALE GENOMIC DNA]</scope>
    <source>
        <strain>UTEX LB 555 / Pringsheim</strain>
    </source>
</reference>
<reference key="3">
    <citation type="book" date="1997" name="Eukaryotism and symbiosis">
        <title>The complete sequence of the cyanelle genome of Cyanophora paradoxa: the genetic complexity of a primitive plastid.</title>
        <editorList>
            <person name="Schenk H.E.A."/>
            <person name="Herrmann R."/>
            <person name="Jeon K.W."/>
            <person name="Mueller N.E."/>
            <person name="Schwemmler W."/>
        </editorList>
        <authorList>
            <person name="Loeffelhardt W."/>
            <person name="Stirewalt V.L."/>
            <person name="Michalowski C.B."/>
            <person name="Annarella M."/>
            <person name="Farley J.Y."/>
            <person name="Schluchter W.M."/>
            <person name="Chung S."/>
            <person name="Newmann-Spallart C."/>
            <person name="Steiner J.M."/>
            <person name="Jakowitsch J."/>
            <person name="Bohnert H.J."/>
            <person name="Bryant D.A."/>
        </authorList>
    </citation>
    <scope>NUCLEOTIDE SEQUENCE [LARGE SCALE GENOMIC DNA]</scope>
    <source>
        <strain>UTEX LB 555 / Pringsheim</strain>
    </source>
</reference>
<dbReference type="EMBL" id="M35728">
    <property type="protein sequence ID" value="AAA31702.1"/>
    <property type="molecule type" value="Genomic_DNA"/>
</dbReference>
<dbReference type="EMBL" id="U30821">
    <property type="protein sequence ID" value="AAA81270.1"/>
    <property type="molecule type" value="Genomic_DNA"/>
</dbReference>
<dbReference type="PIR" id="T06927">
    <property type="entry name" value="T06927"/>
</dbReference>
<dbReference type="RefSeq" id="NP_043239.2">
    <property type="nucleotide sequence ID" value="NC_001675.1"/>
</dbReference>
<dbReference type="SMR" id="P18062"/>
<dbReference type="GeneID" id="801664"/>
<dbReference type="GO" id="GO:0009507">
    <property type="term" value="C:chloroplast"/>
    <property type="evidence" value="ECO:0007669"/>
    <property type="project" value="UniProtKB-UniRule"/>
</dbReference>
<dbReference type="GO" id="GO:0009842">
    <property type="term" value="C:cyanelle"/>
    <property type="evidence" value="ECO:0007669"/>
    <property type="project" value="UniProtKB-SubCell"/>
</dbReference>
<dbReference type="GO" id="GO:0016984">
    <property type="term" value="F:ribulose-bisphosphate carboxylase activity"/>
    <property type="evidence" value="ECO:0007669"/>
    <property type="project" value="UniProtKB-UniRule"/>
</dbReference>
<dbReference type="GO" id="GO:0019253">
    <property type="term" value="P:reductive pentose-phosphate cycle"/>
    <property type="evidence" value="ECO:0007669"/>
    <property type="project" value="UniProtKB-UniRule"/>
</dbReference>
<dbReference type="CDD" id="cd03527">
    <property type="entry name" value="RuBisCO_small"/>
    <property type="match status" value="1"/>
</dbReference>
<dbReference type="Gene3D" id="3.30.190.10">
    <property type="entry name" value="Ribulose bisphosphate carboxylase, small subunit"/>
    <property type="match status" value="1"/>
</dbReference>
<dbReference type="HAMAP" id="MF_00859">
    <property type="entry name" value="RuBisCO_S_bact"/>
    <property type="match status" value="1"/>
</dbReference>
<dbReference type="InterPro" id="IPR024681">
    <property type="entry name" value="RuBisCO_ssu"/>
</dbReference>
<dbReference type="InterPro" id="IPR000894">
    <property type="entry name" value="RuBisCO_ssu_dom"/>
</dbReference>
<dbReference type="InterPro" id="IPR036385">
    <property type="entry name" value="RuBisCO_ssu_sf"/>
</dbReference>
<dbReference type="PANTHER" id="PTHR31262">
    <property type="entry name" value="RIBULOSE BISPHOSPHATE CARBOXYLASE SMALL CHAIN 1, CHLOROPLASTIC"/>
    <property type="match status" value="1"/>
</dbReference>
<dbReference type="Pfam" id="PF00101">
    <property type="entry name" value="RuBisCO_small"/>
    <property type="match status" value="1"/>
</dbReference>
<dbReference type="SMART" id="SM00961">
    <property type="entry name" value="RuBisCO_small"/>
    <property type="match status" value="1"/>
</dbReference>
<dbReference type="SUPFAM" id="SSF55239">
    <property type="entry name" value="RuBisCO, small subunit"/>
    <property type="match status" value="1"/>
</dbReference>
<geneLocation type="cyanelle"/>
<name>RBS_CYAPA</name>
<protein>
    <recommendedName>
        <fullName evidence="1">Ribulose bisphosphate carboxylase small subunit</fullName>
        <shortName evidence="1">RuBisCO small subunit</shortName>
    </recommendedName>
</protein>
<organism>
    <name type="scientific">Cyanophora paradoxa</name>
    <dbReference type="NCBI Taxonomy" id="2762"/>
    <lineage>
        <taxon>Eukaryota</taxon>
        <taxon>Glaucocystophyceae</taxon>
        <taxon>Cyanophoraceae</taxon>
        <taxon>Cyanophora</taxon>
    </lineage>
</organism>
<proteinExistence type="inferred from homology"/>
<gene>
    <name evidence="1" type="primary">rbcS</name>
</gene>
<sequence>MQLRVERKFETFSYLPPLNDQQIARQLQYALSNGYSPAIEFSFTGKAEDLVWTLWKLPLFGAQSPEEVLSEIQACKQQFPNAYIRVVAFDSIRQVQTLMFLVYKPL</sequence>
<comment type="function">
    <text evidence="1">RuBisCO catalyzes two reactions: the carboxylation of D-ribulose 1,5-bisphosphate, the primary event in carbon dioxide fixation, as well as the oxidative fragmentation of the pentose substrate. Both reactions occur simultaneously and in competition at the same active site. Although the small subunit is not catalytic it is essential for maximal activity.</text>
</comment>
<comment type="subunit">
    <text evidence="1">Heterohexadecamer of 8 large and 8 small subunits.</text>
</comment>
<comment type="subcellular location">
    <subcellularLocation>
        <location>Plastid</location>
        <location>Cyanelle</location>
    </subcellularLocation>
</comment>
<comment type="miscellaneous">
    <text evidence="1">The basic functional RuBisCO is composed of a large chain homodimer in a 'head-to-tail' conformation. In form I RuBisCO this homodimer is arranged in a barrel-like tetramer with the small subunits forming a tetrameric 'cap' on each end of the 'barrel'.</text>
</comment>
<comment type="similarity">
    <text evidence="1">Belongs to the RuBisCO small chain family.</text>
</comment>
<keyword id="KW-0113">Calvin cycle</keyword>
<keyword id="KW-0120">Carbon dioxide fixation</keyword>
<keyword id="KW-0194">Cyanelle</keyword>
<keyword id="KW-0601">Photorespiration</keyword>
<keyword id="KW-0602">Photosynthesis</keyword>
<keyword id="KW-0934">Plastid</keyword>